<name>RL31B_BACC2</name>
<protein>
    <recommendedName>
        <fullName evidence="1">Large ribosomal subunit protein bL31B</fullName>
    </recommendedName>
    <alternativeName>
        <fullName evidence="2">50S ribosomal protein L31 type B</fullName>
    </alternativeName>
</protein>
<feature type="chain" id="PRO_1000126784" description="Large ribosomal subunit protein bL31B">
    <location>
        <begin position="1"/>
        <end position="81"/>
    </location>
</feature>
<organism>
    <name type="scientific">Bacillus cereus (strain G9842)</name>
    <dbReference type="NCBI Taxonomy" id="405531"/>
    <lineage>
        <taxon>Bacteria</taxon>
        <taxon>Bacillati</taxon>
        <taxon>Bacillota</taxon>
        <taxon>Bacilli</taxon>
        <taxon>Bacillales</taxon>
        <taxon>Bacillaceae</taxon>
        <taxon>Bacillus</taxon>
        <taxon>Bacillus cereus group</taxon>
    </lineage>
</organism>
<evidence type="ECO:0000255" key="1">
    <source>
        <dbReference type="HAMAP-Rule" id="MF_00502"/>
    </source>
</evidence>
<evidence type="ECO:0000305" key="2"/>
<proteinExistence type="inferred from homology"/>
<gene>
    <name evidence="1" type="primary">rpmE2</name>
    <name type="ordered locus">BCG9842_B5498</name>
</gene>
<dbReference type="EMBL" id="CP001186">
    <property type="protein sequence ID" value="ACK94917.1"/>
    <property type="molecule type" value="Genomic_DNA"/>
</dbReference>
<dbReference type="RefSeq" id="WP_000643435.1">
    <property type="nucleotide sequence ID" value="NC_011772.1"/>
</dbReference>
<dbReference type="SMR" id="B7IQY4"/>
<dbReference type="KEGG" id="bcg:BCG9842_B5498"/>
<dbReference type="HOGENOM" id="CLU_114306_2_2_9"/>
<dbReference type="Proteomes" id="UP000006744">
    <property type="component" value="Chromosome"/>
</dbReference>
<dbReference type="GO" id="GO:1990904">
    <property type="term" value="C:ribonucleoprotein complex"/>
    <property type="evidence" value="ECO:0007669"/>
    <property type="project" value="UniProtKB-KW"/>
</dbReference>
<dbReference type="GO" id="GO:0005840">
    <property type="term" value="C:ribosome"/>
    <property type="evidence" value="ECO:0007669"/>
    <property type="project" value="UniProtKB-KW"/>
</dbReference>
<dbReference type="GO" id="GO:0003735">
    <property type="term" value="F:structural constituent of ribosome"/>
    <property type="evidence" value="ECO:0007669"/>
    <property type="project" value="InterPro"/>
</dbReference>
<dbReference type="GO" id="GO:0006412">
    <property type="term" value="P:translation"/>
    <property type="evidence" value="ECO:0007669"/>
    <property type="project" value="UniProtKB-UniRule"/>
</dbReference>
<dbReference type="Gene3D" id="4.10.830.30">
    <property type="entry name" value="Ribosomal protein L31"/>
    <property type="match status" value="1"/>
</dbReference>
<dbReference type="HAMAP" id="MF_00502">
    <property type="entry name" value="Ribosomal_bL31_2"/>
    <property type="match status" value="1"/>
</dbReference>
<dbReference type="InterPro" id="IPR034704">
    <property type="entry name" value="Ribosomal_bL28/bL31-like_sf"/>
</dbReference>
<dbReference type="InterPro" id="IPR002150">
    <property type="entry name" value="Ribosomal_bL31"/>
</dbReference>
<dbReference type="InterPro" id="IPR027493">
    <property type="entry name" value="Ribosomal_bL31_B"/>
</dbReference>
<dbReference type="InterPro" id="IPR042105">
    <property type="entry name" value="Ribosomal_bL31_sf"/>
</dbReference>
<dbReference type="NCBIfam" id="TIGR00105">
    <property type="entry name" value="L31"/>
    <property type="match status" value="1"/>
</dbReference>
<dbReference type="NCBIfam" id="NF002462">
    <property type="entry name" value="PRK01678.1"/>
    <property type="match status" value="1"/>
</dbReference>
<dbReference type="PANTHER" id="PTHR33280">
    <property type="entry name" value="50S RIBOSOMAL PROTEIN L31, CHLOROPLASTIC"/>
    <property type="match status" value="1"/>
</dbReference>
<dbReference type="PANTHER" id="PTHR33280:SF1">
    <property type="entry name" value="LARGE RIBOSOMAL SUBUNIT PROTEIN BL31C"/>
    <property type="match status" value="1"/>
</dbReference>
<dbReference type="Pfam" id="PF01197">
    <property type="entry name" value="Ribosomal_L31"/>
    <property type="match status" value="1"/>
</dbReference>
<dbReference type="PRINTS" id="PR01249">
    <property type="entry name" value="RIBOSOMALL31"/>
</dbReference>
<dbReference type="SUPFAM" id="SSF143800">
    <property type="entry name" value="L28p-like"/>
    <property type="match status" value="1"/>
</dbReference>
<dbReference type="PROSITE" id="PS01143">
    <property type="entry name" value="RIBOSOMAL_L31"/>
    <property type="match status" value="1"/>
</dbReference>
<accession>B7IQY4</accession>
<sequence length="81" mass="9157">MKAGIHPDYKKVVFMDTNTGFKFLSGSTKGSSETVEWEDGNTYPLLKVEISSDSHPFYTGRQKFATADGRVDRFNKKYGIK</sequence>
<reference key="1">
    <citation type="submission" date="2008-10" db="EMBL/GenBank/DDBJ databases">
        <title>Genome sequence of Bacillus cereus G9842.</title>
        <authorList>
            <person name="Dodson R.J."/>
            <person name="Durkin A.S."/>
            <person name="Rosovitz M.J."/>
            <person name="Rasko D.A."/>
            <person name="Hoffmaster A."/>
            <person name="Ravel J."/>
            <person name="Sutton G."/>
        </authorList>
    </citation>
    <scope>NUCLEOTIDE SEQUENCE [LARGE SCALE GENOMIC DNA]</scope>
    <source>
        <strain>G9842</strain>
    </source>
</reference>
<keyword id="KW-0687">Ribonucleoprotein</keyword>
<keyword id="KW-0689">Ribosomal protein</keyword>
<comment type="subunit">
    <text evidence="1">Part of the 50S ribosomal subunit.</text>
</comment>
<comment type="similarity">
    <text evidence="1">Belongs to the bacterial ribosomal protein bL31 family. Type B subfamily.</text>
</comment>